<keyword id="KW-0963">Cytoplasm</keyword>
<keyword id="KW-0521">NADP</keyword>
<keyword id="KW-0560">Oxidoreductase</keyword>
<keyword id="KW-1185">Reference proteome</keyword>
<keyword id="KW-0926">Vacuole</keyword>
<proteinExistence type="evidence at transcript level"/>
<evidence type="ECO:0000250" key="1">
    <source>
        <dbReference type="UniProtKB" id="L0E2Z4"/>
    </source>
</evidence>
<evidence type="ECO:0000250" key="2">
    <source>
        <dbReference type="UniProtKB" id="O93868"/>
    </source>
</evidence>
<evidence type="ECO:0000250" key="3">
    <source>
        <dbReference type="UniProtKB" id="Q00278"/>
    </source>
</evidence>
<evidence type="ECO:0000269" key="4">
    <source>
    </source>
</evidence>
<evidence type="ECO:0000269" key="5">
    <source>
    </source>
</evidence>
<evidence type="ECO:0000269" key="6">
    <source>
    </source>
</evidence>
<evidence type="ECO:0000303" key="7">
    <source>
    </source>
</evidence>
<evidence type="ECO:0000303" key="8">
    <source>
    </source>
</evidence>
<evidence type="ECO:0000305" key="9"/>
<evidence type="ECO:0000305" key="10">
    <source>
    </source>
</evidence>
<evidence type="ECO:0000305" key="11">
    <source>
    </source>
</evidence>
<evidence type="ECO:0000305" key="12">
    <source>
    </source>
</evidence>
<comment type="function">
    <text evidence="3 4 5 7 10 11 12">Norsolorinic acid ketoreductase; part of the fragmented gene cluster that mediates the biosynthesis of dothistromin (DOTH), a polyketide toxin very similar in structure to the aflatoxin precursor, versicolorin B (PubMed:12039746, PubMed:17683963, PubMed:22069571, PubMed:23207690, PubMed:23448391). The first step of the pathway is the conversion of acetate to norsolorinic acid (NOR) and requires the fatty acid synthase subunits hexA and hexB, as well as the polyketide synthase pksA (PubMed:16649078, PubMed:23207690). PksA combines a hexanoyl starter unit and 7 malonyl-CoA extender units to synthesize the precursor NOR (By similarity). The hexanoyl starter unit is provided to the acyl-carrier protein (ACP) domain by the fungal fatty acid synthase hexA/hexB (By similarity). The second step is the conversion of NOR to averantin (AVN) and requires the norsolorinic acid ketoreductase nor1, which catalyzes the dehydration of norsolorinic acid to form (1'S)-averantin (PubMed:23207690). The cytochrome P450 monooxygenase avnA then catalyzes the hydroxylation of AVN to 5'hydroxyaverantin (HAVN) (PubMed:23207690). The next step is performed by adhA that transforms HAVN to averufin (AVF) (PubMed:23207690). Averufin might then be converted to hydroxyversicolorone by cypX and avfA (PubMed:23207690). Hydroxyversicolorone is further converted versiconal hemiacetal acetate (VHA) by moxY (PubMed:23207690). VHA is then the substrate for the versiconal hemiacetal acetate esterase est1 to yield versiconal (VAL) (PubMed:23207690). Versicolorin B synthase vbsA then converts VAL to versicolorin B (VERB) by closing the bisfuran ring (PubMed:16649078, PubMed:23207690). Then, the activity of the versicolorin B desaturase verB leads to versicolorin A (VERA) (PubMed:23207690). DotB, a predicted chloroperoxidase, may perform epoxidation of the A-ring of VERA (PubMed:23207690). Alternatively, a cytochrome P450, such as cypX or avnA could catalyze this step (PubMed:23207690). It is also possible that another, uncharacterized, cytochrome P450 enzyme is responsible for this step (PubMed:23207690). Opening of the epoxide could potentially be achieved by the epoxide hydrolase epoA (PubMed:23207690). However, epoA seems not to be required for DOTH biosynthesis, but other epoxide hydrolases may have the ability to complement this hydrolysis (PubMed:23207690). Alternatively, opening of the epoxide ring could be achieved non-enzymatically (PubMed:23207690). The next step is the deoxygenation of ring A to yield the 5,8-dihydroxyanthraquinone which is most likely catalyzed by the NADPH dehydrogenase encoded by ver1 (PubMed:23207690). The last stages of DOTH biosynthesis are proposed to involve hydroxylation of the bisfuran (PubMed:23207690). OrdB and norB might have oxidative roles here (PubMed:23207690). An alternative possibility is that cytochrome P450 monoogenases such as avnA and cypX might perform these steps in addition to previously proposed steps (PubMed:23207690).</text>
</comment>
<comment type="catalytic activity">
    <reaction evidence="3">
        <text>(1'S)-averantin + NADP(+) = norsolorinic acid + NADPH + H(+)</text>
        <dbReference type="Rhea" id="RHEA:35447"/>
        <dbReference type="ChEBI" id="CHEBI:15378"/>
        <dbReference type="ChEBI" id="CHEBI:57783"/>
        <dbReference type="ChEBI" id="CHEBI:58349"/>
        <dbReference type="ChEBI" id="CHEBI:71533"/>
        <dbReference type="ChEBI" id="CHEBI:77899"/>
        <dbReference type="EC" id="1.1.1.349"/>
    </reaction>
</comment>
<comment type="pathway">
    <text evidence="7 11">Mycotoxin biosynthesis.</text>
</comment>
<comment type="subcellular location">
    <subcellularLocation>
        <location evidence="3">Cytoplasm</location>
        <location evidence="3">Cytosol</location>
    </subcellularLocation>
    <subcellularLocation>
        <location evidence="3">Vacuole</location>
    </subcellularLocation>
</comment>
<comment type="induction">
    <text evidence="6">Expression is positively regulated by the dothistromin-specific transcription factor aflR (PubMed:23207690).</text>
</comment>
<comment type="similarity">
    <text evidence="9">Belongs to the short-chain dehydrogenases/reductases (SDR) family.</text>
</comment>
<accession>M2Y1A3</accession>
<reference key="1">
    <citation type="journal article" date="2012" name="PLoS Genet.">
        <title>The genomes of the fungal plant pathogens Cladosporium fulvum and Dothistroma septosporum reveal adaptation to different hosts and lifestyles but also signatures of common ancestry.</title>
        <authorList>
            <person name="de Wit P.J.G.M."/>
            <person name="van der Burgt A."/>
            <person name="Oekmen B."/>
            <person name="Stergiopoulos I."/>
            <person name="Abd-Elsalam K.A."/>
            <person name="Aerts A.L."/>
            <person name="Bahkali A.H."/>
            <person name="Beenen H.G."/>
            <person name="Chettri P."/>
            <person name="Cox M.P."/>
            <person name="Datema E."/>
            <person name="de Vries R.P."/>
            <person name="Dhillon B."/>
            <person name="Ganley A.R."/>
            <person name="Griffiths S.A."/>
            <person name="Guo Y."/>
            <person name="Hamelin R.C."/>
            <person name="Henrissat B."/>
            <person name="Kabir M.S."/>
            <person name="Jashni M.K."/>
            <person name="Kema G."/>
            <person name="Klaubauf S."/>
            <person name="Lapidus A."/>
            <person name="Levasseur A."/>
            <person name="Lindquist E."/>
            <person name="Mehrabi R."/>
            <person name="Ohm R.A."/>
            <person name="Owen T.J."/>
            <person name="Salamov A."/>
            <person name="Schwelm A."/>
            <person name="Schijlen E."/>
            <person name="Sun H."/>
            <person name="van den Burg H.A."/>
            <person name="van Ham R.C.H.J."/>
            <person name="Zhang S."/>
            <person name="Goodwin S.B."/>
            <person name="Grigoriev I.V."/>
            <person name="Collemare J."/>
            <person name="Bradshaw R.E."/>
        </authorList>
    </citation>
    <scope>NUCLEOTIDE SEQUENCE [LARGE SCALE GENOMIC DNA]</scope>
    <source>
        <strain>NZE10 / CBS 128990</strain>
    </source>
</reference>
<reference key="2">
    <citation type="journal article" date="2012" name="PLoS Pathog.">
        <title>Diverse lifestyles and strategies of plant pathogenesis encoded in the genomes of eighteen Dothideomycetes fungi.</title>
        <authorList>
            <person name="Ohm R.A."/>
            <person name="Feau N."/>
            <person name="Henrissat B."/>
            <person name="Schoch C.L."/>
            <person name="Horwitz B.A."/>
            <person name="Barry K.W."/>
            <person name="Condon B.J."/>
            <person name="Copeland A.C."/>
            <person name="Dhillon B."/>
            <person name="Glaser F."/>
            <person name="Hesse C.N."/>
            <person name="Kosti I."/>
            <person name="LaButti K."/>
            <person name="Lindquist E.A."/>
            <person name="Lucas S."/>
            <person name="Salamov A.A."/>
            <person name="Bradshaw R.E."/>
            <person name="Ciuffetti L."/>
            <person name="Hamelin R.C."/>
            <person name="Kema G.H.J."/>
            <person name="Lawrence C."/>
            <person name="Scott J.A."/>
            <person name="Spatafora J.W."/>
            <person name="Turgeon B.G."/>
            <person name="de Wit P.J.G.M."/>
            <person name="Zhong S."/>
            <person name="Goodwin S.B."/>
            <person name="Grigoriev I.V."/>
        </authorList>
    </citation>
    <scope>NUCLEOTIDE SEQUENCE [LARGE SCALE GENOMIC DNA]</scope>
    <source>
        <strain>NZE10 / CBS 128990</strain>
    </source>
</reference>
<reference key="3">
    <citation type="journal article" date="2002" name="Appl. Environ. Microbiol.">
        <title>Dothistroma pini, a forest pathogen, contains homologs of aflatoxin biosynthetic pathway genes.</title>
        <authorList>
            <person name="Bradshaw R.E."/>
            <person name="Bhatnagar D."/>
            <person name="Ganley R.J."/>
            <person name="Gillman C.J."/>
            <person name="Monahan B.J."/>
            <person name="Seconi J.M."/>
        </authorList>
    </citation>
    <scope>FUNCTION</scope>
</reference>
<reference key="4">
    <citation type="journal article" date="2006" name="Mycopathologia">
        <title>A polyketide synthase gene required for biosynthesis of the aflatoxin-like toxin, dothistromin.</title>
        <authorList>
            <person name="Bradshaw R.E."/>
            <person name="Jin H."/>
            <person name="Morgan B.S."/>
            <person name="Schwelm A."/>
            <person name="Teddy O.R."/>
            <person name="Young C.A."/>
            <person name="Zhang S."/>
        </authorList>
    </citation>
    <scope>FUNCTION</scope>
</reference>
<reference key="5">
    <citation type="journal article" date="2007" name="Fungal Genet. Biol.">
        <title>A fragmented aflatoxin-like gene cluster in the forest pathogen Dothistroma septosporum.</title>
        <authorList>
            <person name="Zhang S."/>
            <person name="Schwelm A."/>
            <person name="Jin H."/>
            <person name="Collins L.J."/>
            <person name="Bradshaw R.E."/>
        </authorList>
    </citation>
    <scope>FUNCTION</scope>
</reference>
<reference key="6">
    <citation type="journal article" date="2010" name="Toxins">
        <title>Genetics of dothistromin biosynthesis of Dothistroma septosporum: an update.</title>
        <authorList>
            <person name="Schwelm A."/>
            <person name="Bradshaw R.E."/>
        </authorList>
    </citation>
    <scope>REVIEW ON FUNCTION</scope>
    <scope>PATHWAY</scope>
</reference>
<reference key="7">
    <citation type="journal article" date="2013" name="Fungal Genet. Biol.">
        <title>Dothistromin genes at multiple separate loci are regulated by AflR.</title>
        <authorList>
            <person name="Chettri P."/>
            <person name="Ehrlich K.C."/>
            <person name="Cary J.W."/>
            <person name="Collemare J."/>
            <person name="Cox M.P."/>
            <person name="Griffiths S.A."/>
            <person name="Olson M.A."/>
            <person name="de Wit P.J."/>
            <person name="Bradshaw R.E."/>
        </authorList>
    </citation>
    <scope>FUNCTION</scope>
    <scope>INDUCTION</scope>
    <scope>PATHWAY</scope>
</reference>
<reference key="8">
    <citation type="journal article" date="2013" name="New Phytol.">
        <title>Fragmentation of an aflatoxin-like gene cluster in a forest pathogen.</title>
        <authorList>
            <person name="Bradshaw R.E."/>
            <person name="Slot J.C."/>
            <person name="Moore G.G."/>
            <person name="Chettri P."/>
            <person name="de Wit P.J."/>
            <person name="Ehrlich K.C."/>
            <person name="Ganley A.R."/>
            <person name="Olson M.A."/>
            <person name="Rokas A."/>
            <person name="Carbone I."/>
            <person name="Cox M.P."/>
        </authorList>
    </citation>
    <scope>FUNCTION</scope>
</reference>
<organism>
    <name type="scientific">Dothistroma septosporum (strain NZE10 / CBS 128990)</name>
    <name type="common">Red band needle blight fungus</name>
    <name type="synonym">Mycosphaerella pini</name>
    <dbReference type="NCBI Taxonomy" id="675120"/>
    <lineage>
        <taxon>Eukaryota</taxon>
        <taxon>Fungi</taxon>
        <taxon>Dikarya</taxon>
        <taxon>Ascomycota</taxon>
        <taxon>Pezizomycotina</taxon>
        <taxon>Dothideomycetes</taxon>
        <taxon>Dothideomycetidae</taxon>
        <taxon>Mycosphaerellales</taxon>
        <taxon>Mycosphaerellaceae</taxon>
        <taxon>Dothistroma</taxon>
    </lineage>
</organism>
<feature type="chain" id="PRO_0000443464" description="Norsolorinic acid ketoreductase nor1">
    <location>
        <begin position="1"/>
        <end position="268"/>
    </location>
</feature>
<feature type="active site" description="Proton donor" evidence="2">
    <location>
        <position position="182"/>
    </location>
</feature>
<feature type="active site" description="Lowers pKa of active site Tyr" evidence="2">
    <location>
        <position position="186"/>
    </location>
</feature>
<feature type="binding site" evidence="1">
    <location>
        <position position="32"/>
    </location>
    <ligand>
        <name>NADP(+)</name>
        <dbReference type="ChEBI" id="CHEBI:58349"/>
    </ligand>
</feature>
<feature type="binding site" evidence="1">
    <location>
        <position position="79"/>
    </location>
    <ligand>
        <name>NADP(+)</name>
        <dbReference type="ChEBI" id="CHEBI:58349"/>
    </ligand>
</feature>
<feature type="binding site" evidence="2">
    <location>
        <position position="108"/>
    </location>
    <ligand>
        <name>NADP(+)</name>
        <dbReference type="ChEBI" id="CHEBI:58349"/>
    </ligand>
</feature>
<feature type="binding site" evidence="2">
    <location>
        <position position="182"/>
    </location>
    <ligand>
        <name>NADP(+)</name>
        <dbReference type="ChEBI" id="CHEBI:58349"/>
    </ligand>
</feature>
<feature type="binding site" evidence="2">
    <location>
        <position position="186"/>
    </location>
    <ligand>
        <name>NADP(+)</name>
        <dbReference type="ChEBI" id="CHEBI:58349"/>
    </ligand>
</feature>
<feature type="binding site" evidence="2">
    <location>
        <position position="213"/>
    </location>
    <ligand>
        <name>NADP(+)</name>
        <dbReference type="ChEBI" id="CHEBI:58349"/>
    </ligand>
</feature>
<feature type="binding site" evidence="1">
    <location>
        <position position="215"/>
    </location>
    <ligand>
        <name>NADP(+)</name>
        <dbReference type="ChEBI" id="CHEBI:58349"/>
    </ligand>
</feature>
<protein>
    <recommendedName>
        <fullName evidence="3">Norsolorinic acid ketoreductase nor1</fullName>
        <ecNumber evidence="3">1.1.1.349</ecNumber>
    </recommendedName>
    <alternativeName>
        <fullName evidence="8">Dothistromin biosynthesis ketoreductase nor1</fullName>
    </alternativeName>
    <alternativeName>
        <fullName evidence="9">Short chain dehydrogenase nor1</fullName>
    </alternativeName>
</protein>
<sequence length="268" mass="28762">MPSFHNTITIGHRPNGDSKRTTYLVTGASRGIGKGLVASFLARPDSTVIACVRNVASQSKALSDLPCAEGSSLIVVKLDCAVETDPASAVEELQSAHNIRHIDVVVANAAIAGAYGPTSTLPLDAVKEHMQINCYSVLLLFQATRPLLEQAAPGKAKFVFIGAPISTITQMEECARAPLGAYGLTKLAANYLVRKFHFENKWLMSFVIDPGHVQTDMGDSGARLMGRKEAPTTLQQSVDGICARIDEATKEESSGQFLLHEDGSRLPW</sequence>
<dbReference type="EC" id="1.1.1.349" evidence="3"/>
<dbReference type="EMBL" id="KB446546">
    <property type="protein sequence ID" value="EME39084.1"/>
    <property type="molecule type" value="Genomic_DNA"/>
</dbReference>
<dbReference type="SMR" id="M2Y1A3"/>
<dbReference type="STRING" id="675120.M2Y1A3"/>
<dbReference type="EnsemblFungi" id="EME39084">
    <property type="protein sequence ID" value="EME39084"/>
    <property type="gene ID" value="DOTSEDRAFT_75691"/>
</dbReference>
<dbReference type="eggNOG" id="KOG1611">
    <property type="taxonomic scope" value="Eukaryota"/>
</dbReference>
<dbReference type="HOGENOM" id="CLU_010194_9_1_1"/>
<dbReference type="OMA" id="QFVNYNG"/>
<dbReference type="OrthoDB" id="9876299at2759"/>
<dbReference type="Proteomes" id="UP000016933">
    <property type="component" value="Unassembled WGS sequence"/>
</dbReference>
<dbReference type="GO" id="GO:0005829">
    <property type="term" value="C:cytosol"/>
    <property type="evidence" value="ECO:0007669"/>
    <property type="project" value="UniProtKB-SubCell"/>
</dbReference>
<dbReference type="GO" id="GO:0005773">
    <property type="term" value="C:vacuole"/>
    <property type="evidence" value="ECO:0007669"/>
    <property type="project" value="UniProtKB-SubCell"/>
</dbReference>
<dbReference type="GO" id="GO:0140393">
    <property type="term" value="F:norsolorinic acid ketoreductase activity"/>
    <property type="evidence" value="ECO:0007669"/>
    <property type="project" value="UniProtKB-EC"/>
</dbReference>
<dbReference type="CDD" id="cd05325">
    <property type="entry name" value="carb_red_sniffer_like_SDR_c"/>
    <property type="match status" value="1"/>
</dbReference>
<dbReference type="Gene3D" id="3.40.50.720">
    <property type="entry name" value="NAD(P)-binding Rossmann-like Domain"/>
    <property type="match status" value="1"/>
</dbReference>
<dbReference type="InterPro" id="IPR051468">
    <property type="entry name" value="Fungal_SecMetab_SDRs"/>
</dbReference>
<dbReference type="InterPro" id="IPR036291">
    <property type="entry name" value="NAD(P)-bd_dom_sf"/>
</dbReference>
<dbReference type="InterPro" id="IPR002347">
    <property type="entry name" value="SDR_fam"/>
</dbReference>
<dbReference type="PANTHER" id="PTHR43544:SF7">
    <property type="entry name" value="NADB-LER2"/>
    <property type="match status" value="1"/>
</dbReference>
<dbReference type="PANTHER" id="PTHR43544">
    <property type="entry name" value="SHORT-CHAIN DEHYDROGENASE/REDUCTASE"/>
    <property type="match status" value="1"/>
</dbReference>
<dbReference type="Pfam" id="PF00106">
    <property type="entry name" value="adh_short"/>
    <property type="match status" value="1"/>
</dbReference>
<dbReference type="PRINTS" id="PR00081">
    <property type="entry name" value="GDHRDH"/>
</dbReference>
<dbReference type="SUPFAM" id="SSF51735">
    <property type="entry name" value="NAD(P)-binding Rossmann-fold domains"/>
    <property type="match status" value="1"/>
</dbReference>
<name>NOR1_DOTSN</name>
<gene>
    <name evidence="8" type="primary">Nor1</name>
    <name type="ORF">DOTSEDRAFT_75691</name>
</gene>